<protein>
    <recommendedName>
        <fullName evidence="1">Large ribosomal subunit protein bL20</fullName>
    </recommendedName>
    <alternativeName>
        <fullName evidence="2">50S ribosomal protein L20</fullName>
    </alternativeName>
</protein>
<evidence type="ECO:0000255" key="1">
    <source>
        <dbReference type="HAMAP-Rule" id="MF_00382"/>
    </source>
</evidence>
<evidence type="ECO:0000305" key="2"/>
<gene>
    <name evidence="1" type="primary">rplT</name>
    <name type="ordered locus">PSEEN1966</name>
</gene>
<name>RL20_PSEE4</name>
<proteinExistence type="inferred from homology"/>
<sequence>MARVKRGVIARKRHKKILKLAKGYYGARSRVFRVAKQAVIKAGQYAYRDRRQKKRQFRALWIARINAGARTNGLSYSRLIAGLKKASIEIDRKVLADLAVNEKAAFAAIVEKAKAVLA</sequence>
<organism>
    <name type="scientific">Pseudomonas entomophila (strain L48)</name>
    <dbReference type="NCBI Taxonomy" id="384676"/>
    <lineage>
        <taxon>Bacteria</taxon>
        <taxon>Pseudomonadati</taxon>
        <taxon>Pseudomonadota</taxon>
        <taxon>Gammaproteobacteria</taxon>
        <taxon>Pseudomonadales</taxon>
        <taxon>Pseudomonadaceae</taxon>
        <taxon>Pseudomonas</taxon>
    </lineage>
</organism>
<dbReference type="EMBL" id="CT573326">
    <property type="protein sequence ID" value="CAK14801.1"/>
    <property type="molecule type" value="Genomic_DNA"/>
</dbReference>
<dbReference type="RefSeq" id="WP_003250671.1">
    <property type="nucleotide sequence ID" value="NC_008027.1"/>
</dbReference>
<dbReference type="SMR" id="Q1IC12"/>
<dbReference type="STRING" id="384676.PSEEN1966"/>
<dbReference type="GeneID" id="97167549"/>
<dbReference type="KEGG" id="pen:PSEEN1966"/>
<dbReference type="eggNOG" id="COG0292">
    <property type="taxonomic scope" value="Bacteria"/>
</dbReference>
<dbReference type="HOGENOM" id="CLU_123265_0_1_6"/>
<dbReference type="OrthoDB" id="9808966at2"/>
<dbReference type="Proteomes" id="UP000000658">
    <property type="component" value="Chromosome"/>
</dbReference>
<dbReference type="GO" id="GO:1990904">
    <property type="term" value="C:ribonucleoprotein complex"/>
    <property type="evidence" value="ECO:0007669"/>
    <property type="project" value="UniProtKB-KW"/>
</dbReference>
<dbReference type="GO" id="GO:0005840">
    <property type="term" value="C:ribosome"/>
    <property type="evidence" value="ECO:0007669"/>
    <property type="project" value="UniProtKB-KW"/>
</dbReference>
<dbReference type="GO" id="GO:0019843">
    <property type="term" value="F:rRNA binding"/>
    <property type="evidence" value="ECO:0007669"/>
    <property type="project" value="UniProtKB-UniRule"/>
</dbReference>
<dbReference type="GO" id="GO:0003735">
    <property type="term" value="F:structural constituent of ribosome"/>
    <property type="evidence" value="ECO:0007669"/>
    <property type="project" value="InterPro"/>
</dbReference>
<dbReference type="GO" id="GO:0000027">
    <property type="term" value="P:ribosomal large subunit assembly"/>
    <property type="evidence" value="ECO:0007669"/>
    <property type="project" value="UniProtKB-UniRule"/>
</dbReference>
<dbReference type="GO" id="GO:0006412">
    <property type="term" value="P:translation"/>
    <property type="evidence" value="ECO:0007669"/>
    <property type="project" value="InterPro"/>
</dbReference>
<dbReference type="CDD" id="cd07026">
    <property type="entry name" value="Ribosomal_L20"/>
    <property type="match status" value="1"/>
</dbReference>
<dbReference type="FunFam" id="1.10.1900.20:FF:000001">
    <property type="entry name" value="50S ribosomal protein L20"/>
    <property type="match status" value="1"/>
</dbReference>
<dbReference type="Gene3D" id="6.10.160.10">
    <property type="match status" value="1"/>
</dbReference>
<dbReference type="Gene3D" id="1.10.1900.20">
    <property type="entry name" value="Ribosomal protein L20"/>
    <property type="match status" value="1"/>
</dbReference>
<dbReference type="HAMAP" id="MF_00382">
    <property type="entry name" value="Ribosomal_bL20"/>
    <property type="match status" value="1"/>
</dbReference>
<dbReference type="InterPro" id="IPR005813">
    <property type="entry name" value="Ribosomal_bL20"/>
</dbReference>
<dbReference type="InterPro" id="IPR049946">
    <property type="entry name" value="RIBOSOMAL_L20_CS"/>
</dbReference>
<dbReference type="InterPro" id="IPR035566">
    <property type="entry name" value="Ribosomal_protein_bL20_C"/>
</dbReference>
<dbReference type="NCBIfam" id="TIGR01032">
    <property type="entry name" value="rplT_bact"/>
    <property type="match status" value="1"/>
</dbReference>
<dbReference type="PANTHER" id="PTHR10986">
    <property type="entry name" value="39S RIBOSOMAL PROTEIN L20"/>
    <property type="match status" value="1"/>
</dbReference>
<dbReference type="Pfam" id="PF00453">
    <property type="entry name" value="Ribosomal_L20"/>
    <property type="match status" value="1"/>
</dbReference>
<dbReference type="PRINTS" id="PR00062">
    <property type="entry name" value="RIBOSOMALL20"/>
</dbReference>
<dbReference type="SUPFAM" id="SSF74731">
    <property type="entry name" value="Ribosomal protein L20"/>
    <property type="match status" value="1"/>
</dbReference>
<dbReference type="PROSITE" id="PS00937">
    <property type="entry name" value="RIBOSOMAL_L20"/>
    <property type="match status" value="1"/>
</dbReference>
<reference key="1">
    <citation type="journal article" date="2006" name="Nat. Biotechnol.">
        <title>Complete genome sequence of the entomopathogenic and metabolically versatile soil bacterium Pseudomonas entomophila.</title>
        <authorList>
            <person name="Vodovar N."/>
            <person name="Vallenet D."/>
            <person name="Cruveiller S."/>
            <person name="Rouy Z."/>
            <person name="Barbe V."/>
            <person name="Acosta C."/>
            <person name="Cattolico L."/>
            <person name="Jubin C."/>
            <person name="Lajus A."/>
            <person name="Segurens B."/>
            <person name="Vacherie B."/>
            <person name="Wincker P."/>
            <person name="Weissenbach J."/>
            <person name="Lemaitre B."/>
            <person name="Medigue C."/>
            <person name="Boccard F."/>
        </authorList>
    </citation>
    <scope>NUCLEOTIDE SEQUENCE [LARGE SCALE GENOMIC DNA]</scope>
    <source>
        <strain>L48</strain>
    </source>
</reference>
<keyword id="KW-0687">Ribonucleoprotein</keyword>
<keyword id="KW-0689">Ribosomal protein</keyword>
<keyword id="KW-0694">RNA-binding</keyword>
<keyword id="KW-0699">rRNA-binding</keyword>
<accession>Q1IC12</accession>
<feature type="chain" id="PRO_1000049041" description="Large ribosomal subunit protein bL20">
    <location>
        <begin position="1"/>
        <end position="118"/>
    </location>
</feature>
<comment type="function">
    <text evidence="1">Binds directly to 23S ribosomal RNA and is necessary for the in vitro assembly process of the 50S ribosomal subunit. It is not involved in the protein synthesizing functions of that subunit.</text>
</comment>
<comment type="similarity">
    <text evidence="1">Belongs to the bacterial ribosomal protein bL20 family.</text>
</comment>